<name>CDC31_SCHPO</name>
<protein>
    <recommendedName>
        <fullName>Cell division control protein 31</fullName>
    </recommendedName>
</protein>
<accession>O74435</accession>
<reference key="1">
    <citation type="journal article" date="2002" name="Nature">
        <title>The genome sequence of Schizosaccharomyces pombe.</title>
        <authorList>
            <person name="Wood V."/>
            <person name="Gwilliam R."/>
            <person name="Rajandream M.A."/>
            <person name="Lyne M.H."/>
            <person name="Lyne R."/>
            <person name="Stewart A."/>
            <person name="Sgouros J.G."/>
            <person name="Peat N."/>
            <person name="Hayles J."/>
            <person name="Baker S.G."/>
            <person name="Basham D."/>
            <person name="Bowman S."/>
            <person name="Brooks K."/>
            <person name="Brown D."/>
            <person name="Brown S."/>
            <person name="Chillingworth T."/>
            <person name="Churcher C.M."/>
            <person name="Collins M."/>
            <person name="Connor R."/>
            <person name="Cronin A."/>
            <person name="Davis P."/>
            <person name="Feltwell T."/>
            <person name="Fraser A."/>
            <person name="Gentles S."/>
            <person name="Goble A."/>
            <person name="Hamlin N."/>
            <person name="Harris D.E."/>
            <person name="Hidalgo J."/>
            <person name="Hodgson G."/>
            <person name="Holroyd S."/>
            <person name="Hornsby T."/>
            <person name="Howarth S."/>
            <person name="Huckle E.J."/>
            <person name="Hunt S."/>
            <person name="Jagels K."/>
            <person name="James K.D."/>
            <person name="Jones L."/>
            <person name="Jones M."/>
            <person name="Leather S."/>
            <person name="McDonald S."/>
            <person name="McLean J."/>
            <person name="Mooney P."/>
            <person name="Moule S."/>
            <person name="Mungall K.L."/>
            <person name="Murphy L.D."/>
            <person name="Niblett D."/>
            <person name="Odell C."/>
            <person name="Oliver K."/>
            <person name="O'Neil S."/>
            <person name="Pearson D."/>
            <person name="Quail M.A."/>
            <person name="Rabbinowitsch E."/>
            <person name="Rutherford K.M."/>
            <person name="Rutter S."/>
            <person name="Saunders D."/>
            <person name="Seeger K."/>
            <person name="Sharp S."/>
            <person name="Skelton J."/>
            <person name="Simmonds M.N."/>
            <person name="Squares R."/>
            <person name="Squares S."/>
            <person name="Stevens K."/>
            <person name="Taylor K."/>
            <person name="Taylor R.G."/>
            <person name="Tivey A."/>
            <person name="Walsh S.V."/>
            <person name="Warren T."/>
            <person name="Whitehead S."/>
            <person name="Woodward J.R."/>
            <person name="Volckaert G."/>
            <person name="Aert R."/>
            <person name="Robben J."/>
            <person name="Grymonprez B."/>
            <person name="Weltjens I."/>
            <person name="Vanstreels E."/>
            <person name="Rieger M."/>
            <person name="Schaefer M."/>
            <person name="Mueller-Auer S."/>
            <person name="Gabel C."/>
            <person name="Fuchs M."/>
            <person name="Duesterhoeft A."/>
            <person name="Fritzc C."/>
            <person name="Holzer E."/>
            <person name="Moestl D."/>
            <person name="Hilbert H."/>
            <person name="Borzym K."/>
            <person name="Langer I."/>
            <person name="Beck A."/>
            <person name="Lehrach H."/>
            <person name="Reinhardt R."/>
            <person name="Pohl T.M."/>
            <person name="Eger P."/>
            <person name="Zimmermann W."/>
            <person name="Wedler H."/>
            <person name="Wambutt R."/>
            <person name="Purnelle B."/>
            <person name="Goffeau A."/>
            <person name="Cadieu E."/>
            <person name="Dreano S."/>
            <person name="Gloux S."/>
            <person name="Lelaure V."/>
            <person name="Mottier S."/>
            <person name="Galibert F."/>
            <person name="Aves S.J."/>
            <person name="Xiang Z."/>
            <person name="Hunt C."/>
            <person name="Moore K."/>
            <person name="Hurst S.M."/>
            <person name="Lucas M."/>
            <person name="Rochet M."/>
            <person name="Gaillardin C."/>
            <person name="Tallada V.A."/>
            <person name="Garzon A."/>
            <person name="Thode G."/>
            <person name="Daga R.R."/>
            <person name="Cruzado L."/>
            <person name="Jimenez J."/>
            <person name="Sanchez M."/>
            <person name="del Rey F."/>
            <person name="Benito J."/>
            <person name="Dominguez A."/>
            <person name="Revuelta J.L."/>
            <person name="Moreno S."/>
            <person name="Armstrong J."/>
            <person name="Forsburg S.L."/>
            <person name="Cerutti L."/>
            <person name="Lowe T."/>
            <person name="McCombie W.R."/>
            <person name="Paulsen I."/>
            <person name="Potashkin J."/>
            <person name="Shpakovski G.V."/>
            <person name="Ussery D."/>
            <person name="Barrell B.G."/>
            <person name="Nurse P."/>
        </authorList>
    </citation>
    <scope>NUCLEOTIDE SEQUENCE [LARGE SCALE GENOMIC DNA]</scope>
    <source>
        <strain>972 / ATCC 24843</strain>
    </source>
</reference>
<reference key="2">
    <citation type="journal article" date="2003" name="Mol. Biol. Cell">
        <title>Fission yeast cdc31p is a component of the half-bridge and controls SPB duplication.</title>
        <authorList>
            <person name="Paoletti A."/>
            <person name="Bordes N."/>
            <person name="Haddad R."/>
            <person name="Schwartz C.L."/>
            <person name="Chang F."/>
            <person name="Bornens M."/>
        </authorList>
    </citation>
    <scope>FUNCTION</scope>
    <scope>INTERACTION WITH SAD1</scope>
    <scope>SUBCELLULAR LOCATION</scope>
</reference>
<keyword id="KW-0106">Calcium</keyword>
<keyword id="KW-0131">Cell cycle</keyword>
<keyword id="KW-0132">Cell division</keyword>
<keyword id="KW-0479">Metal-binding</keyword>
<keyword id="KW-0498">Mitosis</keyword>
<keyword id="KW-0539">Nucleus</keyword>
<keyword id="KW-1185">Reference proteome</keyword>
<keyword id="KW-0677">Repeat</keyword>
<dbReference type="EMBL" id="CU329672">
    <property type="protein sequence ID" value="CAA20670.1"/>
    <property type="molecule type" value="Genomic_DNA"/>
</dbReference>
<dbReference type="PIR" id="T41061">
    <property type="entry name" value="T41061"/>
</dbReference>
<dbReference type="RefSeq" id="NP_587797.1">
    <property type="nucleotide sequence ID" value="NM_001022790.2"/>
</dbReference>
<dbReference type="SMR" id="O74435"/>
<dbReference type="BioGRID" id="275831">
    <property type="interactions" value="5"/>
</dbReference>
<dbReference type="FunCoup" id="O74435">
    <property type="interactions" value="114"/>
</dbReference>
<dbReference type="STRING" id="284812.O74435"/>
<dbReference type="iPTMnet" id="O74435"/>
<dbReference type="PaxDb" id="4896-SPCC1682.04.1"/>
<dbReference type="EnsemblFungi" id="SPCC1682.04.1">
    <property type="protein sequence ID" value="SPCC1682.04.1:pep"/>
    <property type="gene ID" value="SPCC1682.04"/>
</dbReference>
<dbReference type="GeneID" id="2539261"/>
<dbReference type="KEGG" id="spo:2539261"/>
<dbReference type="PomBase" id="SPCC1682.04">
    <property type="gene designation" value="cdc31"/>
</dbReference>
<dbReference type="VEuPathDB" id="FungiDB:SPCC1682.04"/>
<dbReference type="eggNOG" id="KOG0028">
    <property type="taxonomic scope" value="Eukaryota"/>
</dbReference>
<dbReference type="HOGENOM" id="CLU_061288_18_1_1"/>
<dbReference type="InParanoid" id="O74435"/>
<dbReference type="OMA" id="EFFMIMK"/>
<dbReference type="PhylomeDB" id="O74435"/>
<dbReference type="PRO" id="PR:O74435"/>
<dbReference type="Proteomes" id="UP000002485">
    <property type="component" value="Chromosome III"/>
</dbReference>
<dbReference type="GO" id="GO:0005829">
    <property type="term" value="C:cytosol"/>
    <property type="evidence" value="ECO:0007005"/>
    <property type="project" value="PomBase"/>
</dbReference>
<dbReference type="GO" id="GO:0061496">
    <property type="term" value="C:half bridge of mitotic spindle pole body"/>
    <property type="evidence" value="ECO:0000314"/>
    <property type="project" value="PomBase"/>
</dbReference>
<dbReference type="GO" id="GO:0005825">
    <property type="term" value="C:half bridge of spindle pole body"/>
    <property type="evidence" value="ECO:0000318"/>
    <property type="project" value="GO_Central"/>
</dbReference>
<dbReference type="GO" id="GO:0035974">
    <property type="term" value="C:meiotic spindle pole body"/>
    <property type="evidence" value="ECO:0000314"/>
    <property type="project" value="PomBase"/>
</dbReference>
<dbReference type="GO" id="GO:0044732">
    <property type="term" value="C:mitotic spindle pole body"/>
    <property type="evidence" value="ECO:0007005"/>
    <property type="project" value="PomBase"/>
</dbReference>
<dbReference type="GO" id="GO:0005634">
    <property type="term" value="C:nucleus"/>
    <property type="evidence" value="ECO:0007005"/>
    <property type="project" value="PomBase"/>
</dbReference>
<dbReference type="GO" id="GO:0005509">
    <property type="term" value="F:calcium ion binding"/>
    <property type="evidence" value="ECO:0000318"/>
    <property type="project" value="GO_Central"/>
</dbReference>
<dbReference type="GO" id="GO:0008017">
    <property type="term" value="F:microtubule binding"/>
    <property type="evidence" value="ECO:0000318"/>
    <property type="project" value="GO_Central"/>
</dbReference>
<dbReference type="GO" id="GO:0051301">
    <property type="term" value="P:cell division"/>
    <property type="evidence" value="ECO:0007669"/>
    <property type="project" value="UniProtKB-KW"/>
</dbReference>
<dbReference type="GO" id="GO:1990395">
    <property type="term" value="P:meiotic spindle pole body organization"/>
    <property type="evidence" value="ECO:0000315"/>
    <property type="project" value="PomBase"/>
</dbReference>
<dbReference type="GO" id="GO:0000226">
    <property type="term" value="P:microtubule cytoskeleton organization"/>
    <property type="evidence" value="ECO:0000318"/>
    <property type="project" value="GO_Central"/>
</dbReference>
<dbReference type="GO" id="GO:1903087">
    <property type="term" value="P:mitotic spindle pole body duplication"/>
    <property type="evidence" value="ECO:0000315"/>
    <property type="project" value="PomBase"/>
</dbReference>
<dbReference type="GO" id="GO:0043161">
    <property type="term" value="P:proteasome-mediated ubiquitin-dependent protein catabolic process"/>
    <property type="evidence" value="ECO:0000266"/>
    <property type="project" value="PomBase"/>
</dbReference>
<dbReference type="GO" id="GO:0030474">
    <property type="term" value="P:spindle pole body duplication"/>
    <property type="evidence" value="ECO:0000318"/>
    <property type="project" value="GO_Central"/>
</dbReference>
<dbReference type="CDD" id="cd00051">
    <property type="entry name" value="EFh"/>
    <property type="match status" value="1"/>
</dbReference>
<dbReference type="FunFam" id="1.10.238.10:FF:000077">
    <property type="entry name" value="Centrin 1"/>
    <property type="match status" value="1"/>
</dbReference>
<dbReference type="Gene3D" id="1.10.238.10">
    <property type="entry name" value="EF-hand"/>
    <property type="match status" value="2"/>
</dbReference>
<dbReference type="InterPro" id="IPR050230">
    <property type="entry name" value="CALM/Myosin/TropC-like"/>
</dbReference>
<dbReference type="InterPro" id="IPR011992">
    <property type="entry name" value="EF-hand-dom_pair"/>
</dbReference>
<dbReference type="InterPro" id="IPR018247">
    <property type="entry name" value="EF_Hand_1_Ca_BS"/>
</dbReference>
<dbReference type="InterPro" id="IPR002048">
    <property type="entry name" value="EF_hand_dom"/>
</dbReference>
<dbReference type="PANTHER" id="PTHR23048:SF48">
    <property type="entry name" value="CENTRIN 3"/>
    <property type="match status" value="1"/>
</dbReference>
<dbReference type="PANTHER" id="PTHR23048">
    <property type="entry name" value="MYOSIN LIGHT CHAIN 1, 3"/>
    <property type="match status" value="1"/>
</dbReference>
<dbReference type="Pfam" id="PF13499">
    <property type="entry name" value="EF-hand_7"/>
    <property type="match status" value="2"/>
</dbReference>
<dbReference type="SMART" id="SM00054">
    <property type="entry name" value="EFh"/>
    <property type="match status" value="4"/>
</dbReference>
<dbReference type="SUPFAM" id="SSF47473">
    <property type="entry name" value="EF-hand"/>
    <property type="match status" value="1"/>
</dbReference>
<dbReference type="PROSITE" id="PS00018">
    <property type="entry name" value="EF_HAND_1"/>
    <property type="match status" value="2"/>
</dbReference>
<dbReference type="PROSITE" id="PS50222">
    <property type="entry name" value="EF_HAND_2"/>
    <property type="match status" value="4"/>
</dbReference>
<gene>
    <name type="primary">cdc31</name>
    <name type="ORF">SPCC1682.04</name>
</gene>
<feature type="chain" id="PRO_0000073576" description="Cell division control protein 31">
    <location>
        <begin position="1"/>
        <end position="176"/>
    </location>
</feature>
<feature type="domain" description="EF-hand 1" evidence="1">
    <location>
        <begin position="34"/>
        <end position="69"/>
    </location>
</feature>
<feature type="domain" description="EF-hand 2" evidence="1">
    <location>
        <begin position="70"/>
        <end position="105"/>
    </location>
</feature>
<feature type="domain" description="EF-hand 3" evidence="1">
    <location>
        <begin position="107"/>
        <end position="142"/>
    </location>
</feature>
<feature type="domain" description="EF-hand 4" evidence="1">
    <location>
        <begin position="143"/>
        <end position="176"/>
    </location>
</feature>
<feature type="region of interest" description="Disordered" evidence="2">
    <location>
        <begin position="1"/>
        <end position="21"/>
    </location>
</feature>
<feature type="compositionally biased region" description="Basic residues" evidence="2">
    <location>
        <begin position="1"/>
        <end position="12"/>
    </location>
</feature>
<feature type="binding site" evidence="1">
    <location>
        <position position="47"/>
    </location>
    <ligand>
        <name>Ca(2+)</name>
        <dbReference type="ChEBI" id="CHEBI:29108"/>
        <label>1</label>
    </ligand>
</feature>
<feature type="binding site" evidence="1">
    <location>
        <position position="49"/>
    </location>
    <ligand>
        <name>Ca(2+)</name>
        <dbReference type="ChEBI" id="CHEBI:29108"/>
        <label>1</label>
    </ligand>
</feature>
<feature type="binding site" evidence="1">
    <location>
        <position position="51"/>
    </location>
    <ligand>
        <name>Ca(2+)</name>
        <dbReference type="ChEBI" id="CHEBI:29108"/>
        <label>1</label>
    </ligand>
</feature>
<feature type="binding site" evidence="1">
    <location>
        <position position="58"/>
    </location>
    <ligand>
        <name>Ca(2+)</name>
        <dbReference type="ChEBI" id="CHEBI:29108"/>
        <label>1</label>
    </ligand>
</feature>
<feature type="binding site" evidence="1">
    <location>
        <position position="156"/>
    </location>
    <ligand>
        <name>Ca(2+)</name>
        <dbReference type="ChEBI" id="CHEBI:29108"/>
        <label>2</label>
    </ligand>
</feature>
<feature type="binding site" evidence="1">
    <location>
        <position position="158"/>
    </location>
    <ligand>
        <name>Ca(2+)</name>
        <dbReference type="ChEBI" id="CHEBI:29108"/>
        <label>2</label>
    </ligand>
</feature>
<feature type="binding site" evidence="1">
    <location>
        <position position="160"/>
    </location>
    <ligand>
        <name>Ca(2+)</name>
        <dbReference type="ChEBI" id="CHEBI:29108"/>
        <label>2</label>
    </ligand>
</feature>
<feature type="binding site" evidence="1">
    <location>
        <position position="162"/>
    </location>
    <ligand>
        <name>Ca(2+)</name>
        <dbReference type="ChEBI" id="CHEBI:29108"/>
        <label>2</label>
    </ligand>
</feature>
<feature type="binding site" evidence="1">
    <location>
        <position position="167"/>
    </location>
    <ligand>
        <name>Ca(2+)</name>
        <dbReference type="ChEBI" id="CHEBI:29108"/>
        <label>2</label>
    </ligand>
</feature>
<sequence length="176" mass="20470">MFANARAKRRSRASSPTPARLGGYAPLRVEITEEQRQDINEAFKLFDSDKDNAIDYHELRAAMRALGFNAEKSEVLKILRDFDKTGKGYLQMEDFVRVMTEKIVERDPLEEIKRAFELFDDDETGKISLRNLRRVAKELNENIDDQELEAMIEEFDLDQDGEINEQEFIAIMMDEA</sequence>
<organism>
    <name type="scientific">Schizosaccharomyces pombe (strain 972 / ATCC 24843)</name>
    <name type="common">Fission yeast</name>
    <dbReference type="NCBI Taxonomy" id="284812"/>
    <lineage>
        <taxon>Eukaryota</taxon>
        <taxon>Fungi</taxon>
        <taxon>Dikarya</taxon>
        <taxon>Ascomycota</taxon>
        <taxon>Taphrinomycotina</taxon>
        <taxon>Schizosaccharomycetes</taxon>
        <taxon>Schizosaccharomycetales</taxon>
        <taxon>Schizosaccharomycetaceae</taxon>
        <taxon>Schizosaccharomyces</taxon>
    </lineage>
</organism>
<proteinExistence type="evidence at protein level"/>
<evidence type="ECO:0000255" key="1">
    <source>
        <dbReference type="PROSITE-ProRule" id="PRU00448"/>
    </source>
</evidence>
<evidence type="ECO:0000256" key="2">
    <source>
        <dbReference type="SAM" id="MobiDB-lite"/>
    </source>
</evidence>
<evidence type="ECO:0000269" key="3">
    <source>
    </source>
</evidence>
<evidence type="ECO:0000305" key="4"/>
<comment type="function">
    <text evidence="3">Required for the proper coordination between exit from mitosis and the initiation of septation. Has a role in bipolar spindle formation during spindle pole body (SPB) duplication. Required for the localization of sad1 to the SPB (PubMed:12857865).</text>
</comment>
<comment type="subunit">
    <text evidence="3">Component of the spindle pole body (SPB), acting as the connector of microtubule arrays in the cytoplasm and the nucleoplasm, is involved in nuclear positioning before chromosome segregation, SPB separation, spindle formation, chromosome segregation, nuclear migration into the bud, nuclear reorientation after cytokinesis and nuclear fusion during conjugation. The SPB half-bridge, which is tightly associated with the cytoplasmic side of the nuclear envelope and the SPB, is playing a key role as the starting structure for and in the initiation of SPB duplication in G1 (PubMed:12857865). Within the complex, interacts with sad1 (PubMed:12857865).</text>
</comment>
<comment type="subcellular location">
    <subcellularLocation>
        <location evidence="3">Nucleus</location>
    </subcellularLocation>
    <text>Associates with the half-bridge structure of the SPB.</text>
</comment>
<comment type="similarity">
    <text evidence="4">Belongs to the centrin family.</text>
</comment>